<proteinExistence type="inferred from homology"/>
<comment type="function">
    <text evidence="1">Involved in iron-sulfur (Fe-S) cluster assembly. May act as a regulator of Fe-S biogenesis.</text>
</comment>
<comment type="similarity">
    <text evidence="1">Belongs to the frataxin family.</text>
</comment>
<name>CYAY_RALPJ</name>
<protein>
    <recommendedName>
        <fullName evidence="1">Iron-sulfur cluster assembly protein CyaY</fullName>
    </recommendedName>
</protein>
<evidence type="ECO:0000255" key="1">
    <source>
        <dbReference type="HAMAP-Rule" id="MF_00142"/>
    </source>
</evidence>
<accession>B2UEH7</accession>
<gene>
    <name evidence="1" type="primary">cyaY</name>
    <name type="ordered locus">Rpic_3255</name>
</gene>
<sequence>MPPLSESEFLALAEAELTRIENIVETAADEADADIEVNRTGNVLTLEFDDGSKIIINSQAPMQELWVAARAGGFHFRRGDDGRWVDTRSKEELYVALSRYISQQSDVDVTLAAG</sequence>
<reference key="1">
    <citation type="submission" date="2008-05" db="EMBL/GenBank/DDBJ databases">
        <title>Complete sequence of chromosome 1 of Ralstonia pickettii 12J.</title>
        <authorList>
            <person name="Lucas S."/>
            <person name="Copeland A."/>
            <person name="Lapidus A."/>
            <person name="Glavina del Rio T."/>
            <person name="Dalin E."/>
            <person name="Tice H."/>
            <person name="Bruce D."/>
            <person name="Goodwin L."/>
            <person name="Pitluck S."/>
            <person name="Meincke L."/>
            <person name="Brettin T."/>
            <person name="Detter J.C."/>
            <person name="Han C."/>
            <person name="Kuske C.R."/>
            <person name="Schmutz J."/>
            <person name="Larimer F."/>
            <person name="Land M."/>
            <person name="Hauser L."/>
            <person name="Kyrpides N."/>
            <person name="Mikhailova N."/>
            <person name="Marsh T."/>
            <person name="Richardson P."/>
        </authorList>
    </citation>
    <scope>NUCLEOTIDE SEQUENCE [LARGE SCALE GENOMIC DNA]</scope>
    <source>
        <strain>12J</strain>
    </source>
</reference>
<organism>
    <name type="scientific">Ralstonia pickettii (strain 12J)</name>
    <dbReference type="NCBI Taxonomy" id="402626"/>
    <lineage>
        <taxon>Bacteria</taxon>
        <taxon>Pseudomonadati</taxon>
        <taxon>Pseudomonadota</taxon>
        <taxon>Betaproteobacteria</taxon>
        <taxon>Burkholderiales</taxon>
        <taxon>Burkholderiaceae</taxon>
        <taxon>Ralstonia</taxon>
    </lineage>
</organism>
<keyword id="KW-0408">Iron</keyword>
<keyword id="KW-0479">Metal-binding</keyword>
<feature type="chain" id="PRO_1000096250" description="Iron-sulfur cluster assembly protein CyaY">
    <location>
        <begin position="1"/>
        <end position="114"/>
    </location>
</feature>
<dbReference type="EMBL" id="CP001068">
    <property type="protein sequence ID" value="ACD28377.1"/>
    <property type="molecule type" value="Genomic_DNA"/>
</dbReference>
<dbReference type="SMR" id="B2UEH7"/>
<dbReference type="STRING" id="402626.Rpic_3255"/>
<dbReference type="KEGG" id="rpi:Rpic_3255"/>
<dbReference type="PATRIC" id="fig|402626.5.peg.4389"/>
<dbReference type="eggNOG" id="COG1965">
    <property type="taxonomic scope" value="Bacteria"/>
</dbReference>
<dbReference type="HOGENOM" id="CLU_080880_3_0_4"/>
<dbReference type="GO" id="GO:0005829">
    <property type="term" value="C:cytosol"/>
    <property type="evidence" value="ECO:0007669"/>
    <property type="project" value="TreeGrafter"/>
</dbReference>
<dbReference type="GO" id="GO:0008199">
    <property type="term" value="F:ferric iron binding"/>
    <property type="evidence" value="ECO:0007669"/>
    <property type="project" value="InterPro"/>
</dbReference>
<dbReference type="GO" id="GO:0008198">
    <property type="term" value="F:ferrous iron binding"/>
    <property type="evidence" value="ECO:0007669"/>
    <property type="project" value="TreeGrafter"/>
</dbReference>
<dbReference type="GO" id="GO:0016226">
    <property type="term" value="P:iron-sulfur cluster assembly"/>
    <property type="evidence" value="ECO:0007669"/>
    <property type="project" value="UniProtKB-UniRule"/>
</dbReference>
<dbReference type="CDD" id="cd00503">
    <property type="entry name" value="Frataxin"/>
    <property type="match status" value="1"/>
</dbReference>
<dbReference type="Gene3D" id="3.30.920.10">
    <property type="entry name" value="Frataxin/CyaY"/>
    <property type="match status" value="1"/>
</dbReference>
<dbReference type="HAMAP" id="MF_00142">
    <property type="entry name" value="CyaY"/>
    <property type="match status" value="1"/>
</dbReference>
<dbReference type="InterPro" id="IPR047584">
    <property type="entry name" value="CyaY"/>
</dbReference>
<dbReference type="InterPro" id="IPR002908">
    <property type="entry name" value="Frataxin/CyaY"/>
</dbReference>
<dbReference type="InterPro" id="IPR036524">
    <property type="entry name" value="Frataxin/CyaY_sf"/>
</dbReference>
<dbReference type="InterPro" id="IPR020895">
    <property type="entry name" value="Frataxin_CS"/>
</dbReference>
<dbReference type="NCBIfam" id="TIGR03421">
    <property type="entry name" value="FeS_CyaY"/>
    <property type="match status" value="1"/>
</dbReference>
<dbReference type="PANTHER" id="PTHR16821">
    <property type="entry name" value="FRATAXIN"/>
    <property type="match status" value="1"/>
</dbReference>
<dbReference type="PANTHER" id="PTHR16821:SF2">
    <property type="entry name" value="FRATAXIN, MITOCHONDRIAL"/>
    <property type="match status" value="1"/>
</dbReference>
<dbReference type="Pfam" id="PF01491">
    <property type="entry name" value="Frataxin_Cyay"/>
    <property type="match status" value="1"/>
</dbReference>
<dbReference type="SMART" id="SM01219">
    <property type="entry name" value="Frataxin_Cyay"/>
    <property type="match status" value="1"/>
</dbReference>
<dbReference type="SUPFAM" id="SSF55387">
    <property type="entry name" value="Frataxin/Nqo15-like"/>
    <property type="match status" value="1"/>
</dbReference>
<dbReference type="PROSITE" id="PS01344">
    <property type="entry name" value="FRATAXIN_1"/>
    <property type="match status" value="1"/>
</dbReference>
<dbReference type="PROSITE" id="PS50810">
    <property type="entry name" value="FRATAXIN_2"/>
    <property type="match status" value="1"/>
</dbReference>